<comment type="function">
    <text>Neural cell adhesion molecule.</text>
</comment>
<comment type="subcellular location">
    <subcellularLocation>
        <location>Cell membrane</location>
        <topology>Lipid-anchor</topology>
        <topology>GPI-anchor</topology>
    </subcellularLocation>
</comment>
<comment type="similarity">
    <text evidence="3">Belongs to the immunoglobulin superfamily. IgLON family.</text>
</comment>
<evidence type="ECO:0000255" key="1"/>
<evidence type="ECO:0000255" key="2">
    <source>
        <dbReference type="PROSITE-ProRule" id="PRU00114"/>
    </source>
</evidence>
<evidence type="ECO:0000305" key="3"/>
<protein>
    <recommendedName>
        <fullName>Neurotrimin</fullName>
    </recommendedName>
</protein>
<dbReference type="EMBL" id="AF282980">
    <property type="protein sequence ID" value="AAK00276.1"/>
    <property type="molecule type" value="mRNA"/>
</dbReference>
<dbReference type="EMBL" id="BC023307">
    <property type="protein sequence ID" value="AAH23307.1"/>
    <property type="molecule type" value="mRNA"/>
</dbReference>
<dbReference type="CCDS" id="CCDS90526.1"/>
<dbReference type="RefSeq" id="NP_001344531.1">
    <property type="nucleotide sequence ID" value="NM_001357602.2"/>
</dbReference>
<dbReference type="SMR" id="Q99PJ0"/>
<dbReference type="FunCoup" id="Q99PJ0">
    <property type="interactions" value="364"/>
</dbReference>
<dbReference type="IntAct" id="Q99PJ0">
    <property type="interactions" value="2"/>
</dbReference>
<dbReference type="MINT" id="Q99PJ0"/>
<dbReference type="STRING" id="10090.ENSMUSP00000074578"/>
<dbReference type="GlyConnect" id="2559">
    <property type="glycosylation" value="4 N-Linked glycans (1 site)"/>
</dbReference>
<dbReference type="GlyCosmos" id="Q99PJ0">
    <property type="glycosylation" value="7 sites, 4 glycans"/>
</dbReference>
<dbReference type="GlyGen" id="Q99PJ0">
    <property type="glycosylation" value="9 sites, 8 N-linked glycans (3 sites), 1 O-linked glycan (2 sites)"/>
</dbReference>
<dbReference type="iPTMnet" id="Q99PJ0"/>
<dbReference type="PhosphoSitePlus" id="Q99PJ0"/>
<dbReference type="SwissPalm" id="Q99PJ0"/>
<dbReference type="jPOST" id="Q99PJ0"/>
<dbReference type="PaxDb" id="10090-ENSMUSP00000074578"/>
<dbReference type="PeptideAtlas" id="Q99PJ0"/>
<dbReference type="ProteomicsDB" id="293772"/>
<dbReference type="Antibodypedia" id="33124">
    <property type="antibodies" value="211 antibodies from 31 providers"/>
</dbReference>
<dbReference type="Ensembl" id="ENSMUST00000115237.8">
    <property type="protein sequence ID" value="ENSMUSP00000110892.2"/>
    <property type="gene ID" value="ENSMUSG00000059974.11"/>
</dbReference>
<dbReference type="GeneID" id="235106"/>
<dbReference type="UCSC" id="uc009oqt.1">
    <property type="organism name" value="mouse"/>
</dbReference>
<dbReference type="AGR" id="MGI:2446259"/>
<dbReference type="MGI" id="MGI:2446259">
    <property type="gene designation" value="Ntm"/>
</dbReference>
<dbReference type="VEuPathDB" id="HostDB:ENSMUSG00000059974"/>
<dbReference type="eggNOG" id="KOG3510">
    <property type="taxonomic scope" value="Eukaryota"/>
</dbReference>
<dbReference type="GeneTree" id="ENSGT00940000158679"/>
<dbReference type="InParanoid" id="Q99PJ0"/>
<dbReference type="OMA" id="VILMCQQ"/>
<dbReference type="PhylomeDB" id="Q99PJ0"/>
<dbReference type="Reactome" id="R-MMU-163125">
    <property type="pathway name" value="Post-translational modification: synthesis of GPI-anchored proteins"/>
</dbReference>
<dbReference type="CD-CODE" id="CE726F99">
    <property type="entry name" value="Postsynaptic density"/>
</dbReference>
<dbReference type="ChiTaRS" id="Ntm">
    <property type="organism name" value="mouse"/>
</dbReference>
<dbReference type="PRO" id="PR:Q99PJ0"/>
<dbReference type="Proteomes" id="UP000000589">
    <property type="component" value="Chromosome 9"/>
</dbReference>
<dbReference type="RNAct" id="Q99PJ0">
    <property type="molecule type" value="protein"/>
</dbReference>
<dbReference type="Bgee" id="ENSMUSG00000059974">
    <property type="expression patterns" value="Expressed in primary motor cortex and 225 other cell types or tissues"/>
</dbReference>
<dbReference type="ExpressionAtlas" id="Q99PJ0">
    <property type="expression patterns" value="baseline and differential"/>
</dbReference>
<dbReference type="GO" id="GO:0005886">
    <property type="term" value="C:plasma membrane"/>
    <property type="evidence" value="ECO:0007669"/>
    <property type="project" value="UniProtKB-SubCell"/>
</dbReference>
<dbReference type="GO" id="GO:0098552">
    <property type="term" value="C:side of membrane"/>
    <property type="evidence" value="ECO:0007669"/>
    <property type="project" value="UniProtKB-KW"/>
</dbReference>
<dbReference type="GO" id="GO:0007155">
    <property type="term" value="P:cell adhesion"/>
    <property type="evidence" value="ECO:0007669"/>
    <property type="project" value="UniProtKB-KW"/>
</dbReference>
<dbReference type="FunFam" id="2.60.40.10:FF:000013">
    <property type="entry name" value="cell adhesion molecule 1 isoform X1"/>
    <property type="match status" value="1"/>
</dbReference>
<dbReference type="FunFam" id="2.60.40.10:FF:000305">
    <property type="entry name" value="neurotrimin isoform X2"/>
    <property type="match status" value="1"/>
</dbReference>
<dbReference type="FunFam" id="2.60.40.10:FF:000113">
    <property type="entry name" value="Opioid-binding protein/cell adhesion molecule"/>
    <property type="match status" value="1"/>
</dbReference>
<dbReference type="Gene3D" id="2.60.40.10">
    <property type="entry name" value="Immunoglobulins"/>
    <property type="match status" value="3"/>
</dbReference>
<dbReference type="InterPro" id="IPR007110">
    <property type="entry name" value="Ig-like_dom"/>
</dbReference>
<dbReference type="InterPro" id="IPR036179">
    <property type="entry name" value="Ig-like_dom_sf"/>
</dbReference>
<dbReference type="InterPro" id="IPR013783">
    <property type="entry name" value="Ig-like_fold"/>
</dbReference>
<dbReference type="InterPro" id="IPR013098">
    <property type="entry name" value="Ig_I-set"/>
</dbReference>
<dbReference type="InterPro" id="IPR003599">
    <property type="entry name" value="Ig_sub"/>
</dbReference>
<dbReference type="InterPro" id="IPR003598">
    <property type="entry name" value="Ig_sub2"/>
</dbReference>
<dbReference type="InterPro" id="IPR050876">
    <property type="entry name" value="IgLON_domain"/>
</dbReference>
<dbReference type="InterPro" id="IPR013151">
    <property type="entry name" value="Immunoglobulin_dom"/>
</dbReference>
<dbReference type="PANTHER" id="PTHR42757">
    <property type="entry name" value="IGLON FAMILY OF IMMUNOGLOBULIN SUPERFAMILY-RELATED"/>
    <property type="match status" value="1"/>
</dbReference>
<dbReference type="PANTHER" id="PTHR42757:SF9">
    <property type="entry name" value="NEUROTRIMIN"/>
    <property type="match status" value="1"/>
</dbReference>
<dbReference type="Pfam" id="PF07679">
    <property type="entry name" value="I-set"/>
    <property type="match status" value="1"/>
</dbReference>
<dbReference type="Pfam" id="PF00047">
    <property type="entry name" value="ig"/>
    <property type="match status" value="1"/>
</dbReference>
<dbReference type="Pfam" id="PF13927">
    <property type="entry name" value="Ig_3"/>
    <property type="match status" value="1"/>
</dbReference>
<dbReference type="SMART" id="SM00409">
    <property type="entry name" value="IG"/>
    <property type="match status" value="3"/>
</dbReference>
<dbReference type="SMART" id="SM00408">
    <property type="entry name" value="IGc2"/>
    <property type="match status" value="3"/>
</dbReference>
<dbReference type="SUPFAM" id="SSF48726">
    <property type="entry name" value="Immunoglobulin"/>
    <property type="match status" value="3"/>
</dbReference>
<dbReference type="PROSITE" id="PS50835">
    <property type="entry name" value="IG_LIKE"/>
    <property type="match status" value="3"/>
</dbReference>
<sequence>MGVCGYLFLPWKCLVVVSLRLLFLVPTGVPVRSGDATFPKAMDNVTVRQGESATLRCTIDNRVTRVAWLNRSTILYAGNDKWCLDPRVVLLSNTQTQYSIEIQNVDVYDEGPYTCSVQTDNHPKTSRVHLIVQVSPKIVEISSDISINEGNNISLTCIATGRPEPTVTWRHISPKAVGFVSEDEYLEIQGITREQSGEYECSASNDVAAPVVRRVKVTVNYPPYISEAKGTGVPVGQKGTLQCEASAVPSAEFQWFKDDKRLVEGKKGVKVENRPFLSKLTFFNVSEHDYGNYTCVASNKLGHTNASIMLFGPGAVSEVNNGTSRRAGCIWLLPLLVLHLLLKF</sequence>
<accession>Q99PJ0</accession>
<reference key="1">
    <citation type="submission" date="2000-06" db="EMBL/GenBank/DDBJ databases">
        <title>Cloning and expression of mouse neurotrimin gene in the developing nervous system.</title>
        <authorList>
            <person name="Kim T.H."/>
            <person name="Choi S.C."/>
            <person name="Kim J."/>
            <person name="Jeon J.W."/>
            <person name="Kim K.D."/>
            <person name="Lee S.H."/>
        </authorList>
    </citation>
    <scope>NUCLEOTIDE SEQUENCE [MRNA]</scope>
    <source>
        <strain>ICR</strain>
        <tissue>Brain</tissue>
    </source>
</reference>
<reference key="2">
    <citation type="journal article" date="2004" name="Genome Res.">
        <title>The status, quality, and expansion of the NIH full-length cDNA project: the Mammalian Gene Collection (MGC).</title>
        <authorList>
            <consortium name="The MGC Project Team"/>
        </authorList>
    </citation>
    <scope>NUCLEOTIDE SEQUENCE [LARGE SCALE MRNA]</scope>
    <source>
        <strain>C57BL/6J</strain>
        <tissue>Eye</tissue>
    </source>
</reference>
<reference key="3">
    <citation type="journal article" date="2010" name="Cell">
        <title>A tissue-specific atlas of mouse protein phosphorylation and expression.</title>
        <authorList>
            <person name="Huttlin E.L."/>
            <person name="Jedrychowski M.P."/>
            <person name="Elias J.E."/>
            <person name="Goswami T."/>
            <person name="Rad R."/>
            <person name="Beausoleil S.A."/>
            <person name="Villen J."/>
            <person name="Haas W."/>
            <person name="Sowa M.E."/>
            <person name="Gygi S.P."/>
        </authorList>
    </citation>
    <scope>IDENTIFICATION BY MASS SPECTROMETRY [LARGE SCALE ANALYSIS]</scope>
    <source>
        <tissue>Brain</tissue>
    </source>
</reference>
<keyword id="KW-0130">Cell adhesion</keyword>
<keyword id="KW-1003">Cell membrane</keyword>
<keyword id="KW-1015">Disulfide bond</keyword>
<keyword id="KW-0325">Glycoprotein</keyword>
<keyword id="KW-0336">GPI-anchor</keyword>
<keyword id="KW-0393">Immunoglobulin domain</keyword>
<keyword id="KW-0449">Lipoprotein</keyword>
<keyword id="KW-0472">Membrane</keyword>
<keyword id="KW-1185">Reference proteome</keyword>
<keyword id="KW-0677">Repeat</keyword>
<keyword id="KW-0732">Signal</keyword>
<proteinExistence type="evidence at protein level"/>
<feature type="signal peptide" evidence="1">
    <location>
        <begin position="1"/>
        <end position="33"/>
    </location>
</feature>
<feature type="chain" id="PRO_0000015112" description="Neurotrimin">
    <location>
        <begin position="34"/>
        <end position="321"/>
    </location>
</feature>
<feature type="propeptide" id="PRO_0000015113" description="Removed in mature form" evidence="1">
    <location>
        <begin position="322"/>
        <end position="344"/>
    </location>
</feature>
<feature type="domain" description="Ig-like C2-type 1">
    <location>
        <begin position="39"/>
        <end position="126"/>
    </location>
</feature>
<feature type="domain" description="Ig-like C2-type 2">
    <location>
        <begin position="136"/>
        <end position="218"/>
    </location>
</feature>
<feature type="domain" description="Ig-like C2-type 3">
    <location>
        <begin position="222"/>
        <end position="309"/>
    </location>
</feature>
<feature type="lipid moiety-binding region" description="GPI-anchor amidated asparagine; alternate" evidence="1">
    <location>
        <position position="321"/>
    </location>
</feature>
<feature type="glycosylation site" description="N-linked (GlcNAc...) asparagine" evidence="1">
    <location>
        <position position="44"/>
    </location>
</feature>
<feature type="glycosylation site" description="N-linked (GlcNAc...) asparagine" evidence="1">
    <location>
        <position position="70"/>
    </location>
</feature>
<feature type="glycosylation site" description="N-linked (GlcNAc...) asparagine" evidence="1">
    <location>
        <position position="152"/>
    </location>
</feature>
<feature type="glycosylation site" description="N-linked (GlcNAc...) asparagine" evidence="1">
    <location>
        <position position="284"/>
    </location>
</feature>
<feature type="glycosylation site" description="N-linked (GlcNAc...) asparagine" evidence="1">
    <location>
        <position position="292"/>
    </location>
</feature>
<feature type="glycosylation site" description="N-linked (GlcNAc...) asparagine" evidence="1">
    <location>
        <position position="305"/>
    </location>
</feature>
<feature type="glycosylation site" description="N-linked (GlcNAc...) asparagine; alternate" evidence="1">
    <location>
        <position position="321"/>
    </location>
</feature>
<feature type="disulfide bond" evidence="2">
    <location>
        <begin position="57"/>
        <end position="115"/>
    </location>
</feature>
<feature type="disulfide bond" evidence="2">
    <location>
        <begin position="157"/>
        <end position="201"/>
    </location>
</feature>
<feature type="disulfide bond" evidence="2">
    <location>
        <begin position="243"/>
        <end position="295"/>
    </location>
</feature>
<feature type="sequence conflict" description="In Ref. 1; AAK00276." evidence="3" ref="1">
    <original>L</original>
    <variation>P</variation>
    <location>
        <position position="75"/>
    </location>
</feature>
<feature type="sequence conflict" description="In Ref. 1; AAK00276." evidence="3" ref="1">
    <original>S</original>
    <variation>G</variation>
    <location>
        <position position="92"/>
    </location>
</feature>
<feature type="sequence conflict" description="In Ref. 1; AAK00276." evidence="3" ref="1">
    <original>T</original>
    <variation>I</variation>
    <location>
        <position position="119"/>
    </location>
</feature>
<feature type="sequence conflict" description="In Ref. 1; AAK00276." evidence="3" ref="1">
    <original>E</original>
    <variation>Q</variation>
    <location>
        <position position="187"/>
    </location>
</feature>
<feature type="sequence conflict" description="In Ref. 1; AAK00276." evidence="3" ref="1">
    <original>R</original>
    <variation>P</variation>
    <location>
        <position position="213"/>
    </location>
</feature>
<feature type="sequence conflict" description="In Ref. 1; AAK00276." evidence="3" ref="1">
    <original>I</original>
    <variation>F</variation>
    <location>
        <position position="225"/>
    </location>
</feature>
<organism>
    <name type="scientific">Mus musculus</name>
    <name type="common">Mouse</name>
    <dbReference type="NCBI Taxonomy" id="10090"/>
    <lineage>
        <taxon>Eukaryota</taxon>
        <taxon>Metazoa</taxon>
        <taxon>Chordata</taxon>
        <taxon>Craniata</taxon>
        <taxon>Vertebrata</taxon>
        <taxon>Euteleostomi</taxon>
        <taxon>Mammalia</taxon>
        <taxon>Eutheria</taxon>
        <taxon>Euarchontoglires</taxon>
        <taxon>Glires</taxon>
        <taxon>Rodentia</taxon>
        <taxon>Myomorpha</taxon>
        <taxon>Muroidea</taxon>
        <taxon>Muridae</taxon>
        <taxon>Murinae</taxon>
        <taxon>Mus</taxon>
        <taxon>Mus</taxon>
    </lineage>
</organism>
<name>NTRI_MOUSE</name>
<gene>
    <name type="primary">Ntm</name>
    <name type="synonym">Hnt</name>
    <name type="synonym">Nt</name>
</gene>